<gene>
    <name type="primary">SDG40</name>
    <name type="synonym">SET40</name>
    <name type="ordered locus">At5g17240</name>
    <name type="ORF">MKP11.9</name>
</gene>
<organism>
    <name type="scientific">Arabidopsis thaliana</name>
    <name type="common">Mouse-ear cress</name>
    <dbReference type="NCBI Taxonomy" id="3702"/>
    <lineage>
        <taxon>Eukaryota</taxon>
        <taxon>Viridiplantae</taxon>
        <taxon>Streptophyta</taxon>
        <taxon>Embryophyta</taxon>
        <taxon>Tracheophyta</taxon>
        <taxon>Spermatophyta</taxon>
        <taxon>Magnoliopsida</taxon>
        <taxon>eudicotyledons</taxon>
        <taxon>Gunneridae</taxon>
        <taxon>Pentapetalae</taxon>
        <taxon>rosids</taxon>
        <taxon>malvids</taxon>
        <taxon>Brassicales</taxon>
        <taxon>Brassicaceae</taxon>
        <taxon>Camelineae</taxon>
        <taxon>Arabidopsis</taxon>
    </lineage>
</organism>
<comment type="similarity">
    <text evidence="1">Belongs to the class V-like SAM-binding methyltransferase superfamily.</text>
</comment>
<comment type="sequence caution" evidence="2">
    <conflict type="erroneous gene model prediction">
        <sequence resource="EMBL-CDS" id="BAB10511"/>
    </conflict>
</comment>
<keyword id="KW-0489">Methyltransferase</keyword>
<keyword id="KW-1185">Reference proteome</keyword>
<keyword id="KW-0949">S-adenosyl-L-methionine</keyword>
<keyword id="KW-0808">Transferase</keyword>
<accession>Q6NQJ8</accession>
<accession>Q9FFI7</accession>
<evidence type="ECO:0000255" key="1">
    <source>
        <dbReference type="PROSITE-ProRule" id="PRU00190"/>
    </source>
</evidence>
<evidence type="ECO:0000305" key="2"/>
<dbReference type="EC" id="2.1.1.-"/>
<dbReference type="EMBL" id="AB005238">
    <property type="protein sequence ID" value="BAB10511.1"/>
    <property type="status" value="ALT_SEQ"/>
    <property type="molecule type" value="Genomic_DNA"/>
</dbReference>
<dbReference type="EMBL" id="CP002688">
    <property type="protein sequence ID" value="AED92403.1"/>
    <property type="molecule type" value="Genomic_DNA"/>
</dbReference>
<dbReference type="EMBL" id="BT010455">
    <property type="protein sequence ID" value="AAQ62875.1"/>
    <property type="molecule type" value="mRNA"/>
</dbReference>
<dbReference type="EMBL" id="AK175921">
    <property type="protein sequence ID" value="BAD43684.1"/>
    <property type="molecule type" value="mRNA"/>
</dbReference>
<dbReference type="RefSeq" id="NP_197226.2">
    <property type="nucleotide sequence ID" value="NM_121730.4"/>
</dbReference>
<dbReference type="SMR" id="Q6NQJ8"/>
<dbReference type="BioGRID" id="16864">
    <property type="interactions" value="3"/>
</dbReference>
<dbReference type="FunCoup" id="Q6NQJ8">
    <property type="interactions" value="394"/>
</dbReference>
<dbReference type="IntAct" id="Q6NQJ8">
    <property type="interactions" value="3"/>
</dbReference>
<dbReference type="STRING" id="3702.Q6NQJ8"/>
<dbReference type="PaxDb" id="3702-AT5G17240.1"/>
<dbReference type="ProteomicsDB" id="232776"/>
<dbReference type="EnsemblPlants" id="AT5G17240.1">
    <property type="protein sequence ID" value="AT5G17240.1"/>
    <property type="gene ID" value="AT5G17240"/>
</dbReference>
<dbReference type="GeneID" id="831588"/>
<dbReference type="Gramene" id="AT5G17240.1">
    <property type="protein sequence ID" value="AT5G17240.1"/>
    <property type="gene ID" value="AT5G17240"/>
</dbReference>
<dbReference type="KEGG" id="ath:AT5G17240"/>
<dbReference type="Araport" id="AT5G17240"/>
<dbReference type="TAIR" id="AT5G17240">
    <property type="gene designation" value="SDG40"/>
</dbReference>
<dbReference type="eggNOG" id="KOG1337">
    <property type="taxonomic scope" value="Eukaryota"/>
</dbReference>
<dbReference type="HOGENOM" id="CLU_570338_0_0_1"/>
<dbReference type="InParanoid" id="Q6NQJ8"/>
<dbReference type="OMA" id="TFRSWLW"/>
<dbReference type="PhylomeDB" id="Q6NQJ8"/>
<dbReference type="PRO" id="PR:Q6NQJ8"/>
<dbReference type="Proteomes" id="UP000006548">
    <property type="component" value="Chromosome 5"/>
</dbReference>
<dbReference type="ExpressionAtlas" id="Q6NQJ8">
    <property type="expression patterns" value="baseline and differential"/>
</dbReference>
<dbReference type="GO" id="GO:0008168">
    <property type="term" value="F:methyltransferase activity"/>
    <property type="evidence" value="ECO:0007669"/>
    <property type="project" value="UniProtKB-KW"/>
</dbReference>
<dbReference type="GO" id="GO:0032259">
    <property type="term" value="P:methylation"/>
    <property type="evidence" value="ECO:0007669"/>
    <property type="project" value="UniProtKB-KW"/>
</dbReference>
<dbReference type="CDD" id="cd10527">
    <property type="entry name" value="SET_LSMT"/>
    <property type="match status" value="1"/>
</dbReference>
<dbReference type="FunFam" id="3.90.1410.10:FF:000012">
    <property type="entry name" value="Protein SET DOMAIN GROUP 40"/>
    <property type="match status" value="1"/>
</dbReference>
<dbReference type="FunFam" id="3.90.1420.10:FF:000010">
    <property type="entry name" value="Protein SET DOMAIN GROUP 40"/>
    <property type="match status" value="1"/>
</dbReference>
<dbReference type="Gene3D" id="3.90.1420.10">
    <property type="entry name" value="Rubisco LSMT, substrate-binding domain"/>
    <property type="match status" value="1"/>
</dbReference>
<dbReference type="Gene3D" id="3.90.1410.10">
    <property type="entry name" value="set domain protein methyltransferase, domain 1"/>
    <property type="match status" value="1"/>
</dbReference>
<dbReference type="InterPro" id="IPR036464">
    <property type="entry name" value="Rubisco_LSMT_subst-bd_sf"/>
</dbReference>
<dbReference type="InterPro" id="IPR001214">
    <property type="entry name" value="SET_dom"/>
</dbReference>
<dbReference type="InterPro" id="IPR046341">
    <property type="entry name" value="SET_dom_sf"/>
</dbReference>
<dbReference type="InterPro" id="IPR050600">
    <property type="entry name" value="SETD3_SETD6_MTase"/>
</dbReference>
<dbReference type="PANTHER" id="PTHR13271:SF91">
    <property type="entry name" value="PROTEIN SET DOMAIN GROUP 40"/>
    <property type="match status" value="1"/>
</dbReference>
<dbReference type="PANTHER" id="PTHR13271">
    <property type="entry name" value="UNCHARACTERIZED PUTATIVE METHYLTRANSFERASE"/>
    <property type="match status" value="1"/>
</dbReference>
<dbReference type="Pfam" id="PF00856">
    <property type="entry name" value="SET"/>
    <property type="match status" value="1"/>
</dbReference>
<dbReference type="SUPFAM" id="SSF81822">
    <property type="entry name" value="RuBisCo LSMT C-terminal, substrate-binding domain"/>
    <property type="match status" value="1"/>
</dbReference>
<dbReference type="SUPFAM" id="SSF82199">
    <property type="entry name" value="SET domain"/>
    <property type="match status" value="1"/>
</dbReference>
<dbReference type="PROSITE" id="PS50280">
    <property type="entry name" value="SET"/>
    <property type="match status" value="1"/>
</dbReference>
<reference key="1">
    <citation type="journal article" date="1997" name="DNA Res.">
        <title>Structural analysis of Arabidopsis thaliana chromosome 5. I. Sequence features of the 1.6 Mb regions covered by twenty physically assigned P1 clones.</title>
        <authorList>
            <person name="Sato S."/>
            <person name="Kotani H."/>
            <person name="Nakamura Y."/>
            <person name="Kaneko T."/>
            <person name="Asamizu E."/>
            <person name="Fukami M."/>
            <person name="Miyajima N."/>
            <person name="Tabata S."/>
        </authorList>
    </citation>
    <scope>NUCLEOTIDE SEQUENCE [LARGE SCALE GENOMIC DNA]</scope>
    <source>
        <strain>cv. Columbia</strain>
    </source>
</reference>
<reference key="2">
    <citation type="journal article" date="2017" name="Plant J.">
        <title>Araport11: a complete reannotation of the Arabidopsis thaliana reference genome.</title>
        <authorList>
            <person name="Cheng C.Y."/>
            <person name="Krishnakumar V."/>
            <person name="Chan A.P."/>
            <person name="Thibaud-Nissen F."/>
            <person name="Schobel S."/>
            <person name="Town C.D."/>
        </authorList>
    </citation>
    <scope>GENOME REANNOTATION</scope>
    <source>
        <strain>cv. Columbia</strain>
    </source>
</reference>
<reference key="3">
    <citation type="journal article" date="2003" name="Science">
        <title>Empirical analysis of transcriptional activity in the Arabidopsis genome.</title>
        <authorList>
            <person name="Yamada K."/>
            <person name="Lim J."/>
            <person name="Dale J.M."/>
            <person name="Chen H."/>
            <person name="Shinn P."/>
            <person name="Palm C.J."/>
            <person name="Southwick A.M."/>
            <person name="Wu H.C."/>
            <person name="Kim C.J."/>
            <person name="Nguyen M."/>
            <person name="Pham P.K."/>
            <person name="Cheuk R.F."/>
            <person name="Karlin-Newmann G."/>
            <person name="Liu S.X."/>
            <person name="Lam B."/>
            <person name="Sakano H."/>
            <person name="Wu T."/>
            <person name="Yu G."/>
            <person name="Miranda M."/>
            <person name="Quach H.L."/>
            <person name="Tripp M."/>
            <person name="Chang C.H."/>
            <person name="Lee J.M."/>
            <person name="Toriumi M.J."/>
            <person name="Chan M.M."/>
            <person name="Tang C.C."/>
            <person name="Onodera C.S."/>
            <person name="Deng J.M."/>
            <person name="Akiyama K."/>
            <person name="Ansari Y."/>
            <person name="Arakawa T."/>
            <person name="Banh J."/>
            <person name="Banno F."/>
            <person name="Bowser L."/>
            <person name="Brooks S.Y."/>
            <person name="Carninci P."/>
            <person name="Chao Q."/>
            <person name="Choy N."/>
            <person name="Enju A."/>
            <person name="Goldsmith A.D."/>
            <person name="Gurjal M."/>
            <person name="Hansen N.F."/>
            <person name="Hayashizaki Y."/>
            <person name="Johnson-Hopson C."/>
            <person name="Hsuan V.W."/>
            <person name="Iida K."/>
            <person name="Karnes M."/>
            <person name="Khan S."/>
            <person name="Koesema E."/>
            <person name="Ishida J."/>
            <person name="Jiang P.X."/>
            <person name="Jones T."/>
            <person name="Kawai J."/>
            <person name="Kamiya A."/>
            <person name="Meyers C."/>
            <person name="Nakajima M."/>
            <person name="Narusaka M."/>
            <person name="Seki M."/>
            <person name="Sakurai T."/>
            <person name="Satou M."/>
            <person name="Tamse R."/>
            <person name="Vaysberg M."/>
            <person name="Wallender E.K."/>
            <person name="Wong C."/>
            <person name="Yamamura Y."/>
            <person name="Yuan S."/>
            <person name="Shinozaki K."/>
            <person name="Davis R.W."/>
            <person name="Theologis A."/>
            <person name="Ecker J.R."/>
        </authorList>
    </citation>
    <scope>NUCLEOTIDE SEQUENCE [LARGE SCALE MRNA]</scope>
    <source>
        <strain>cv. Columbia</strain>
    </source>
</reference>
<reference key="4">
    <citation type="submission" date="2004-09" db="EMBL/GenBank/DDBJ databases">
        <title>Large-scale analysis of RIKEN Arabidopsis full-length (RAFL) cDNAs.</title>
        <authorList>
            <person name="Totoki Y."/>
            <person name="Seki M."/>
            <person name="Ishida J."/>
            <person name="Nakajima M."/>
            <person name="Enju A."/>
            <person name="Kamiya A."/>
            <person name="Narusaka M."/>
            <person name="Shin-i T."/>
            <person name="Nakagawa M."/>
            <person name="Sakamoto N."/>
            <person name="Oishi K."/>
            <person name="Kohara Y."/>
            <person name="Kobayashi M."/>
            <person name="Toyoda A."/>
            <person name="Sakaki Y."/>
            <person name="Sakurai T."/>
            <person name="Iida K."/>
            <person name="Akiyama K."/>
            <person name="Satou M."/>
            <person name="Toyoda T."/>
            <person name="Konagaya A."/>
            <person name="Carninci P."/>
            <person name="Kawai J."/>
            <person name="Hayashizaki Y."/>
            <person name="Shinozaki K."/>
        </authorList>
    </citation>
    <scope>NUCLEOTIDE SEQUENCE [LARGE SCALE MRNA]</scope>
    <source>
        <strain>cv. Columbia</strain>
    </source>
</reference>
<protein>
    <recommendedName>
        <fullName>Protein SET DOMAIN GROUP 40</fullName>
        <ecNumber>2.1.1.-</ecNumber>
    </recommendedName>
</protein>
<proteinExistence type="evidence at transcript level"/>
<feature type="chain" id="PRO_0000234285" description="Protein SET DOMAIN GROUP 40">
    <location>
        <begin position="1"/>
        <end position="491"/>
    </location>
</feature>
<feature type="domain" description="SET" evidence="1">
    <location>
        <begin position="36"/>
        <end position="278"/>
    </location>
</feature>
<name>SDG40_ARATH</name>
<sequence>MDLEHQTMETFLRWAAEIGISDSIDSSRFRDSCLGHSLSVSDFPDAGGRGLGAARELKKGELVLKVPRKALMTTESIIAKDLKLSDAVNLHNSLSSTQILSVCLLYEMSKEKKSFWYPYLFHIPRDYDLLATFGNFEKQALQVEDAVWATEKATAKCQSEWKEAGSLMKELELKPKFRSFQAWLWASATISSRTLHVPWDSAGCLCPVGDLFNYDAPGDYSNTPQGPESANNVEEAGLVVETHSERLTDGGFEEDVNAYCLYARRNYQLGEQVLLCYGTYTNLELLEHYGFMLEENSNDKVFIPLETSLFSLASSWPKDSLYIHQDGKLSFALISTLRLWLIPQSQRDKSVMRLVYAGSQISVKNEILVMKWMSEKCGSVLRDLPTSVTEDTVLLHNIDKLQDPELRLEQKETEAFGSEVRAFLDANCLWDVTVLSGKPIEFSRKTSRMLSKWRWSVQWRLSYKRTLADCISYCNEKMNNLLGTQDRLRDL</sequence>